<organism>
    <name type="scientific">Corynebacterium glutamicum (strain R)</name>
    <dbReference type="NCBI Taxonomy" id="340322"/>
    <lineage>
        <taxon>Bacteria</taxon>
        <taxon>Bacillati</taxon>
        <taxon>Actinomycetota</taxon>
        <taxon>Actinomycetes</taxon>
        <taxon>Mycobacteriales</taxon>
        <taxon>Corynebacteriaceae</taxon>
        <taxon>Corynebacterium</taxon>
    </lineage>
</organism>
<reference key="1">
    <citation type="journal article" date="2007" name="Microbiology">
        <title>Comparative analysis of the Corynebacterium glutamicum group and complete genome sequence of strain R.</title>
        <authorList>
            <person name="Yukawa H."/>
            <person name="Omumasaba C.A."/>
            <person name="Nonaka H."/>
            <person name="Kos P."/>
            <person name="Okai N."/>
            <person name="Suzuki N."/>
            <person name="Suda M."/>
            <person name="Tsuge Y."/>
            <person name="Watanabe J."/>
            <person name="Ikeda Y."/>
            <person name="Vertes A.A."/>
            <person name="Inui M."/>
        </authorList>
    </citation>
    <scope>NUCLEOTIDE SEQUENCE [LARGE SCALE GENOMIC DNA]</scope>
    <source>
        <strain>R</strain>
    </source>
</reference>
<sequence>MTIKVAIAGASGYAGGEILRLLLGHPAYASGELEIGALTAASTAGSTLGELMPHIPQLADRVIQDTTAETLAGHDVVFLGLPHGFSAEIALQLGPDVTVIDCAADFRLQNAADWEKFYGSEHQGTWPYGIPEMPGHREALRGAKRVAVPGCFPTGATLALIPAVQAGLIEPDVSVVSITGVSGGGKKASVALLGSETMGSLKAYNTSGKHRHTPEIAQNLGEVSDKPVKVSFTPVLAPLPRGILTTATAPLKEGVTAEQARAVYEEFYAQETFVHVLPEGAQPQTQAVLGSNMCHVQVEIDEEAGKVLVTSAIDNLTKGTAGAAVQCMNLSVGFDEAAGLPQVGVAP</sequence>
<protein>
    <recommendedName>
        <fullName evidence="1">N-acetyl-gamma-glutamyl-phosphate reductase</fullName>
        <shortName evidence="1">AGPR</shortName>
        <ecNumber evidence="1">1.2.1.38</ecNumber>
    </recommendedName>
    <alternativeName>
        <fullName evidence="1">N-acetyl-glutamate semialdehyde dehydrogenase</fullName>
        <shortName evidence="1">NAGSA dehydrogenase</shortName>
    </alternativeName>
</protein>
<proteinExistence type="inferred from homology"/>
<dbReference type="EC" id="1.2.1.38" evidence="1"/>
<dbReference type="EMBL" id="AP009044">
    <property type="protein sequence ID" value="BAF54448.1"/>
    <property type="molecule type" value="Genomic_DNA"/>
</dbReference>
<dbReference type="RefSeq" id="WP_011897205.1">
    <property type="nucleotide sequence ID" value="NC_009342.1"/>
</dbReference>
<dbReference type="SMR" id="A4QDY8"/>
<dbReference type="KEGG" id="cgt:cgR_1457"/>
<dbReference type="HOGENOM" id="CLU_006384_0_0_11"/>
<dbReference type="PhylomeDB" id="A4QDY8"/>
<dbReference type="UniPathway" id="UPA00068">
    <property type="reaction ID" value="UER00108"/>
</dbReference>
<dbReference type="Proteomes" id="UP000006698">
    <property type="component" value="Chromosome"/>
</dbReference>
<dbReference type="GO" id="GO:0005737">
    <property type="term" value="C:cytoplasm"/>
    <property type="evidence" value="ECO:0007669"/>
    <property type="project" value="UniProtKB-SubCell"/>
</dbReference>
<dbReference type="GO" id="GO:0003942">
    <property type="term" value="F:N-acetyl-gamma-glutamyl-phosphate reductase activity"/>
    <property type="evidence" value="ECO:0007669"/>
    <property type="project" value="UniProtKB-UniRule"/>
</dbReference>
<dbReference type="GO" id="GO:0051287">
    <property type="term" value="F:NAD binding"/>
    <property type="evidence" value="ECO:0007669"/>
    <property type="project" value="InterPro"/>
</dbReference>
<dbReference type="GO" id="GO:0070401">
    <property type="term" value="F:NADP+ binding"/>
    <property type="evidence" value="ECO:0007669"/>
    <property type="project" value="InterPro"/>
</dbReference>
<dbReference type="GO" id="GO:0006526">
    <property type="term" value="P:L-arginine biosynthetic process"/>
    <property type="evidence" value="ECO:0007669"/>
    <property type="project" value="UniProtKB-UniRule"/>
</dbReference>
<dbReference type="CDD" id="cd24148">
    <property type="entry name" value="AGPR_1_actinobacAGPR_like"/>
    <property type="match status" value="1"/>
</dbReference>
<dbReference type="CDD" id="cd23934">
    <property type="entry name" value="AGPR_1_C"/>
    <property type="match status" value="1"/>
</dbReference>
<dbReference type="FunFam" id="3.30.360.10:FF:000014">
    <property type="entry name" value="N-acetyl-gamma-glutamyl-phosphate reductase"/>
    <property type="match status" value="1"/>
</dbReference>
<dbReference type="Gene3D" id="3.30.360.10">
    <property type="entry name" value="Dihydrodipicolinate Reductase, domain 2"/>
    <property type="match status" value="1"/>
</dbReference>
<dbReference type="Gene3D" id="3.40.50.720">
    <property type="entry name" value="NAD(P)-binding Rossmann-like Domain"/>
    <property type="match status" value="1"/>
</dbReference>
<dbReference type="HAMAP" id="MF_00150">
    <property type="entry name" value="ArgC_type1"/>
    <property type="match status" value="1"/>
</dbReference>
<dbReference type="InterPro" id="IPR023013">
    <property type="entry name" value="AGPR_AS"/>
</dbReference>
<dbReference type="InterPro" id="IPR000706">
    <property type="entry name" value="AGPR_type-1"/>
</dbReference>
<dbReference type="InterPro" id="IPR036291">
    <property type="entry name" value="NAD(P)-bd_dom_sf"/>
</dbReference>
<dbReference type="InterPro" id="IPR050085">
    <property type="entry name" value="NAGSA_dehydrogenase"/>
</dbReference>
<dbReference type="InterPro" id="IPR000534">
    <property type="entry name" value="Semialdehyde_DH_NAD-bd"/>
</dbReference>
<dbReference type="NCBIfam" id="TIGR01850">
    <property type="entry name" value="argC"/>
    <property type="match status" value="1"/>
</dbReference>
<dbReference type="PANTHER" id="PTHR32338:SF10">
    <property type="entry name" value="N-ACETYL-GAMMA-GLUTAMYL-PHOSPHATE REDUCTASE, CHLOROPLASTIC-RELATED"/>
    <property type="match status" value="1"/>
</dbReference>
<dbReference type="PANTHER" id="PTHR32338">
    <property type="entry name" value="N-ACETYL-GAMMA-GLUTAMYL-PHOSPHATE REDUCTASE, CHLOROPLASTIC-RELATED-RELATED"/>
    <property type="match status" value="1"/>
</dbReference>
<dbReference type="Pfam" id="PF01118">
    <property type="entry name" value="Semialdhyde_dh"/>
    <property type="match status" value="1"/>
</dbReference>
<dbReference type="Pfam" id="PF22698">
    <property type="entry name" value="Semialdhyde_dhC_1"/>
    <property type="match status" value="1"/>
</dbReference>
<dbReference type="SMART" id="SM00859">
    <property type="entry name" value="Semialdhyde_dh"/>
    <property type="match status" value="1"/>
</dbReference>
<dbReference type="SUPFAM" id="SSF55347">
    <property type="entry name" value="Glyceraldehyde-3-phosphate dehydrogenase-like, C-terminal domain"/>
    <property type="match status" value="1"/>
</dbReference>
<dbReference type="SUPFAM" id="SSF51735">
    <property type="entry name" value="NAD(P)-binding Rossmann-fold domains"/>
    <property type="match status" value="1"/>
</dbReference>
<dbReference type="PROSITE" id="PS01224">
    <property type="entry name" value="ARGC"/>
    <property type="match status" value="1"/>
</dbReference>
<name>ARGC_CORGB</name>
<keyword id="KW-0028">Amino-acid biosynthesis</keyword>
<keyword id="KW-0055">Arginine biosynthesis</keyword>
<keyword id="KW-0963">Cytoplasm</keyword>
<keyword id="KW-0521">NADP</keyword>
<keyword id="KW-0560">Oxidoreductase</keyword>
<gene>
    <name evidence="1" type="primary">argC</name>
    <name type="ordered locus">cgR_1457</name>
</gene>
<feature type="chain" id="PRO_1000010991" description="N-acetyl-gamma-glutamyl-phosphate reductase">
    <location>
        <begin position="1"/>
        <end position="347"/>
    </location>
</feature>
<feature type="active site" evidence="1">
    <location>
        <position position="151"/>
    </location>
</feature>
<evidence type="ECO:0000255" key="1">
    <source>
        <dbReference type="HAMAP-Rule" id="MF_00150"/>
    </source>
</evidence>
<comment type="function">
    <text evidence="1">Catalyzes the NADPH-dependent reduction of N-acetyl-5-glutamyl phosphate to yield N-acetyl-L-glutamate 5-semialdehyde.</text>
</comment>
<comment type="catalytic activity">
    <reaction evidence="1">
        <text>N-acetyl-L-glutamate 5-semialdehyde + phosphate + NADP(+) = N-acetyl-L-glutamyl 5-phosphate + NADPH + H(+)</text>
        <dbReference type="Rhea" id="RHEA:21588"/>
        <dbReference type="ChEBI" id="CHEBI:15378"/>
        <dbReference type="ChEBI" id="CHEBI:29123"/>
        <dbReference type="ChEBI" id="CHEBI:43474"/>
        <dbReference type="ChEBI" id="CHEBI:57783"/>
        <dbReference type="ChEBI" id="CHEBI:57936"/>
        <dbReference type="ChEBI" id="CHEBI:58349"/>
        <dbReference type="EC" id="1.2.1.38"/>
    </reaction>
</comment>
<comment type="pathway">
    <text evidence="1">Amino-acid biosynthesis; L-arginine biosynthesis; N(2)-acetyl-L-ornithine from L-glutamate: step 3/4.</text>
</comment>
<comment type="subcellular location">
    <subcellularLocation>
        <location evidence="1">Cytoplasm</location>
    </subcellularLocation>
</comment>
<comment type="similarity">
    <text evidence="1">Belongs to the NAGSA dehydrogenase family. Type 1 subfamily.</text>
</comment>
<accession>A4QDY8</accession>